<sequence>MDEEHLRTLIRTIVRETLNPNLVPIGVSNHHVHLTEEDFQKLFPGQKIEMLKKLRQHADFAAKQTVDLIGPKGTIEHVRLMGPYRSHSQVEIARSENFTLGIDAPIRMSGDLDGTPSIKVRSPYAEIEIQGVIVAKRHIHMSLEDAKRFGVKLGDSMQVEVDGDGGRKTIFDDVVARPREDFVLEMHIDTDEANAANVGLGNNSFGKVIIKKKN</sequence>
<keyword id="KW-0012">Acyltransferase</keyword>
<keyword id="KW-1283">Bacterial microcompartment</keyword>
<keyword id="KW-0479">Metal-binding</keyword>
<keyword id="KW-1185">Reference proteome</keyword>
<keyword id="KW-0808">Transferase</keyword>
<keyword id="KW-0862">Zinc</keyword>
<accession>A5VMA5</accession>
<comment type="function">
    <text evidence="2">Involved in 1,2-propanediol (1,2-PD) utilization within the bacterial microcompartment (BMC) dedicated to 1,2-PD degradation by catalyzing the conversion of propanoyl-CoA to propanoyl-phosphate.</text>
</comment>
<comment type="catalytic activity">
    <reaction evidence="2">
        <text>propanoyl-CoA + phosphate = propanoyl phosphate + CoA</text>
        <dbReference type="Rhea" id="RHEA:28046"/>
        <dbReference type="ChEBI" id="CHEBI:43474"/>
        <dbReference type="ChEBI" id="CHEBI:57287"/>
        <dbReference type="ChEBI" id="CHEBI:57392"/>
        <dbReference type="ChEBI" id="CHEBI:58933"/>
        <dbReference type="EC" id="2.3.1.222"/>
    </reaction>
</comment>
<comment type="cofactor">
    <cofactor evidence="1">
        <name>Zn(2+)</name>
        <dbReference type="ChEBI" id="CHEBI:29105"/>
    </cofactor>
    <text evidence="1">There are 2 Zn(2+) ions per monomer; Zn(2+) and CoA bind inbetween the 2 domains in each monomer.</text>
</comment>
<comment type="pathway">
    <text>Polyol metabolism; 1,2-propanediol degradation.</text>
</comment>
<comment type="subcellular location">
    <subcellularLocation>
        <location evidence="2">Bacterial microcompartment</location>
    </subcellularLocation>
</comment>
<comment type="domain">
    <text evidence="1">Formed by 2 beta-barrels, each is capped on both ends by short alpha-helices.</text>
</comment>
<comment type="similarity">
    <text evidence="3">Belongs to the PduL family.</text>
</comment>
<organism>
    <name type="scientific">Limosilactobacillus reuteri (strain DSM 20016)</name>
    <name type="common">Lactobacillus reuteri</name>
    <dbReference type="NCBI Taxonomy" id="557436"/>
    <lineage>
        <taxon>Bacteria</taxon>
        <taxon>Bacillati</taxon>
        <taxon>Bacillota</taxon>
        <taxon>Bacilli</taxon>
        <taxon>Lactobacillales</taxon>
        <taxon>Lactobacillaceae</taxon>
        <taxon>Limosilactobacillus</taxon>
    </lineage>
</organism>
<feature type="chain" id="PRO_0000407704" description="Phosphate propanoyltransferase">
    <location>
        <begin position="1"/>
        <end position="214"/>
    </location>
</feature>
<feature type="binding site" evidence="1">
    <location>
        <begin position="27"/>
        <end position="29"/>
    </location>
    <ligand>
        <name>CoA</name>
        <dbReference type="ChEBI" id="CHEBI:57287"/>
    </ligand>
</feature>
<feature type="binding site" evidence="1">
    <location>
        <position position="31"/>
    </location>
    <ligand>
        <name>Zn(2+)</name>
        <dbReference type="ChEBI" id="CHEBI:29105"/>
        <label>1</label>
    </ligand>
</feature>
<feature type="binding site" evidence="1">
    <location>
        <position position="33"/>
    </location>
    <ligand>
        <name>Zn(2+)</name>
        <dbReference type="ChEBI" id="CHEBI:29105"/>
        <label>1</label>
    </ligand>
</feature>
<feature type="binding site" evidence="1">
    <location>
        <position position="72"/>
    </location>
    <ligand>
        <name>CoA</name>
        <dbReference type="ChEBI" id="CHEBI:57287"/>
    </ligand>
</feature>
<feature type="binding site" evidence="1">
    <location>
        <position position="79"/>
    </location>
    <ligand>
        <name>CoA</name>
        <dbReference type="ChEBI" id="CHEBI:57287"/>
    </ligand>
</feature>
<feature type="binding site" evidence="1">
    <location>
        <position position="85"/>
    </location>
    <ligand>
        <name>phosphate</name>
        <dbReference type="ChEBI" id="CHEBI:43474"/>
    </ligand>
</feature>
<feature type="binding site" evidence="1">
    <location>
        <position position="91"/>
    </location>
    <ligand>
        <name>Zn(2+)</name>
        <dbReference type="ChEBI" id="CHEBI:29105"/>
        <label>1</label>
    </ligand>
</feature>
<feature type="binding site" evidence="1">
    <location>
        <position position="98"/>
    </location>
    <ligand>
        <name>CoA</name>
        <dbReference type="ChEBI" id="CHEBI:57287"/>
    </ligand>
</feature>
<feature type="binding site" evidence="1">
    <location>
        <position position="138"/>
    </location>
    <ligand>
        <name>Zn(2+)</name>
        <dbReference type="ChEBI" id="CHEBI:29105"/>
        <label>2</label>
    </ligand>
</feature>
<feature type="binding site" evidence="1">
    <location>
        <position position="140"/>
    </location>
    <ligand>
        <name>Zn(2+)</name>
        <dbReference type="ChEBI" id="CHEBI:29105"/>
        <label>2</label>
    </ligand>
</feature>
<feature type="binding site" evidence="1">
    <location>
        <position position="187"/>
    </location>
    <ligand>
        <name>Zn(2+)</name>
        <dbReference type="ChEBI" id="CHEBI:29105"/>
        <label>2</label>
    </ligand>
</feature>
<feature type="binding site" evidence="1">
    <location>
        <position position="194"/>
    </location>
    <ligand>
        <name>CoA</name>
        <dbReference type="ChEBI" id="CHEBI:57287"/>
    </ligand>
</feature>
<gene>
    <name type="primary">pduL</name>
    <name type="ordered locus">Lreu_1740</name>
</gene>
<reference key="1">
    <citation type="journal article" date="2011" name="PLoS Genet.">
        <title>The evolution of host specialization in the vertebrate gut symbiont Lactobacillus reuteri.</title>
        <authorList>
            <person name="Frese S.A."/>
            <person name="Benson A.K."/>
            <person name="Tannock G.W."/>
            <person name="Loach D.M."/>
            <person name="Kim J."/>
            <person name="Zhang M."/>
            <person name="Oh P.L."/>
            <person name="Heng N.C."/>
            <person name="Patil P.B."/>
            <person name="Juge N."/>
            <person name="Mackenzie D.A."/>
            <person name="Pearson B.M."/>
            <person name="Lapidus A."/>
            <person name="Dalin E."/>
            <person name="Tice H."/>
            <person name="Goltsman E."/>
            <person name="Land M."/>
            <person name="Hauser L."/>
            <person name="Ivanova N."/>
            <person name="Kyrpides N.C."/>
            <person name="Walter J."/>
        </authorList>
    </citation>
    <scope>NUCLEOTIDE SEQUENCE [LARGE SCALE GENOMIC DNA]</scope>
    <source>
        <strain>DSM 20016</strain>
    </source>
</reference>
<evidence type="ECO:0000250" key="1">
    <source>
        <dbReference type="UniProtKB" id="Q21A54"/>
    </source>
</evidence>
<evidence type="ECO:0000250" key="2">
    <source>
        <dbReference type="UniProtKB" id="Q9XDN5"/>
    </source>
</evidence>
<evidence type="ECO:0000305" key="3"/>
<dbReference type="EC" id="2.3.1.222"/>
<dbReference type="EMBL" id="CP000705">
    <property type="protein sequence ID" value="ABQ83979.1"/>
    <property type="molecule type" value="Genomic_DNA"/>
</dbReference>
<dbReference type="RefSeq" id="WP_003669186.1">
    <property type="nucleotide sequence ID" value="NC_009513.1"/>
</dbReference>
<dbReference type="SMR" id="A5VMA5"/>
<dbReference type="STRING" id="557436.Lreu_1740"/>
<dbReference type="GeneID" id="77190607"/>
<dbReference type="KEGG" id="lre:Lreu_1740"/>
<dbReference type="PATRIC" id="fig|557436.17.peg.1047"/>
<dbReference type="eggNOG" id="COG4869">
    <property type="taxonomic scope" value="Bacteria"/>
</dbReference>
<dbReference type="HOGENOM" id="CLU_080676_1_0_9"/>
<dbReference type="OMA" id="DMHIDTD"/>
<dbReference type="UniPathway" id="UPA00621"/>
<dbReference type="Proteomes" id="UP000001991">
    <property type="component" value="Chromosome"/>
</dbReference>
<dbReference type="GO" id="GO:0031469">
    <property type="term" value="C:bacterial microcompartment"/>
    <property type="evidence" value="ECO:0007669"/>
    <property type="project" value="UniProtKB-SubCell"/>
</dbReference>
<dbReference type="GO" id="GO:0016747">
    <property type="term" value="F:acyltransferase activity, transferring groups other than amino-acyl groups"/>
    <property type="evidence" value="ECO:0007669"/>
    <property type="project" value="InterPro"/>
</dbReference>
<dbReference type="GO" id="GO:0046872">
    <property type="term" value="F:metal ion binding"/>
    <property type="evidence" value="ECO:0007669"/>
    <property type="project" value="UniProtKB-KW"/>
</dbReference>
<dbReference type="GO" id="GO:0051144">
    <property type="term" value="P:propanediol catabolic process"/>
    <property type="evidence" value="ECO:0007669"/>
    <property type="project" value="UniProtKB-UniPathway"/>
</dbReference>
<dbReference type="InterPro" id="IPR008300">
    <property type="entry name" value="PTAC"/>
</dbReference>
<dbReference type="NCBIfam" id="NF011652">
    <property type="entry name" value="PRK15070.1"/>
    <property type="match status" value="1"/>
</dbReference>
<dbReference type="Pfam" id="PF06130">
    <property type="entry name" value="PTAC"/>
    <property type="match status" value="1"/>
</dbReference>
<dbReference type="PIRSF" id="PIRSF010130">
    <property type="entry name" value="PduL"/>
    <property type="match status" value="1"/>
</dbReference>
<name>PDUL_LIMRD</name>
<protein>
    <recommendedName>
        <fullName>Phosphate propanoyltransferase</fullName>
        <ecNumber>2.3.1.222</ecNumber>
    </recommendedName>
    <alternativeName>
        <fullName>Phosphate acyltransferase PduL</fullName>
    </alternativeName>
    <alternativeName>
        <fullName>Phosphotransacylase PduL</fullName>
        <shortName>PTAC</shortName>
    </alternativeName>
    <alternativeName>
        <fullName>Propanediol utilization protein PduL</fullName>
    </alternativeName>
</protein>
<proteinExistence type="inferred from homology"/>